<organism>
    <name type="scientific">Listeria monocytogenes serotype 4b (strain CLIP80459)</name>
    <dbReference type="NCBI Taxonomy" id="568819"/>
    <lineage>
        <taxon>Bacteria</taxon>
        <taxon>Bacillati</taxon>
        <taxon>Bacillota</taxon>
        <taxon>Bacilli</taxon>
        <taxon>Bacillales</taxon>
        <taxon>Listeriaceae</taxon>
        <taxon>Listeria</taxon>
    </lineage>
</organism>
<protein>
    <recommendedName>
        <fullName evidence="1">Acetyl-coenzyme A carboxylase carboxyl transferase subunit alpha</fullName>
        <shortName evidence="1">ACCase subunit alpha</shortName>
        <shortName evidence="1">Acetyl-CoA carboxylase carboxyltransferase subunit alpha</shortName>
        <ecNumber evidence="1">2.1.3.15</ecNumber>
    </recommendedName>
</protein>
<sequence length="318" mass="35263">MANEMEFEKPILELKSKIADLKEYNETSDVDLTNEIEKLEKRLAKLESSIYSNMTAWDKFQVARHPERPTTLDYISLLFEDFMELHGDRAFGDDAAIVGGIATFHGIPVTVIGHQRGKDTKDNLHRNFGMPHPEGFRKALRLMKQADKFGRPIICFIDTKGAYPGRAAEERGQSEAIARNLYEMSDMKVPIISIVIGEGGSGGALALGVGNQIFMLENAVFSVISPEGAAAILWKDASQAKKAAESMRITAGDLFELGITDGIIPEVKGGAHRDLNAQAEEINKTITKSLHALMAFSEEQLIEQRYEKFKKIGVYDTL</sequence>
<feature type="chain" id="PRO_1000213128" description="Acetyl-coenzyme A carboxylase carboxyl transferase subunit alpha">
    <location>
        <begin position="1"/>
        <end position="318"/>
    </location>
</feature>
<feature type="domain" description="CoA carboxyltransferase C-terminal" evidence="2">
    <location>
        <begin position="38"/>
        <end position="292"/>
    </location>
</feature>
<comment type="function">
    <text evidence="1">Component of the acetyl coenzyme A carboxylase (ACC) complex. First, biotin carboxylase catalyzes the carboxylation of biotin on its carrier protein (BCCP) and then the CO(2) group is transferred by the carboxyltransferase to acetyl-CoA to form malonyl-CoA.</text>
</comment>
<comment type="catalytic activity">
    <reaction evidence="1">
        <text>N(6)-carboxybiotinyl-L-lysyl-[protein] + acetyl-CoA = N(6)-biotinyl-L-lysyl-[protein] + malonyl-CoA</text>
        <dbReference type="Rhea" id="RHEA:54728"/>
        <dbReference type="Rhea" id="RHEA-COMP:10505"/>
        <dbReference type="Rhea" id="RHEA-COMP:10506"/>
        <dbReference type="ChEBI" id="CHEBI:57288"/>
        <dbReference type="ChEBI" id="CHEBI:57384"/>
        <dbReference type="ChEBI" id="CHEBI:83144"/>
        <dbReference type="ChEBI" id="CHEBI:83145"/>
        <dbReference type="EC" id="2.1.3.15"/>
    </reaction>
</comment>
<comment type="pathway">
    <text evidence="1">Lipid metabolism; malonyl-CoA biosynthesis; malonyl-CoA from acetyl-CoA: step 1/1.</text>
</comment>
<comment type="subunit">
    <text evidence="1">Acetyl-CoA carboxylase is a heterohexamer composed of biotin carboxyl carrier protein (AccB), biotin carboxylase (AccC) and two subunits each of ACCase subunit alpha (AccA) and ACCase subunit beta (AccD).</text>
</comment>
<comment type="subcellular location">
    <subcellularLocation>
        <location evidence="1">Cytoplasm</location>
    </subcellularLocation>
</comment>
<comment type="similarity">
    <text evidence="1">Belongs to the AccA family.</text>
</comment>
<dbReference type="EC" id="2.1.3.15" evidence="1"/>
<dbReference type="EMBL" id="FM242711">
    <property type="protein sequence ID" value="CAS05344.1"/>
    <property type="molecule type" value="Genomic_DNA"/>
</dbReference>
<dbReference type="RefSeq" id="WP_003726608.1">
    <property type="nucleotide sequence ID" value="NC_012488.1"/>
</dbReference>
<dbReference type="SMR" id="C1KVL9"/>
<dbReference type="KEGG" id="lmc:Lm4b_01583"/>
<dbReference type="HOGENOM" id="CLU_015486_0_2_9"/>
<dbReference type="UniPathway" id="UPA00655">
    <property type="reaction ID" value="UER00711"/>
</dbReference>
<dbReference type="GO" id="GO:0009317">
    <property type="term" value="C:acetyl-CoA carboxylase complex"/>
    <property type="evidence" value="ECO:0007669"/>
    <property type="project" value="InterPro"/>
</dbReference>
<dbReference type="GO" id="GO:0003989">
    <property type="term" value="F:acetyl-CoA carboxylase activity"/>
    <property type="evidence" value="ECO:0007669"/>
    <property type="project" value="InterPro"/>
</dbReference>
<dbReference type="GO" id="GO:0005524">
    <property type="term" value="F:ATP binding"/>
    <property type="evidence" value="ECO:0007669"/>
    <property type="project" value="UniProtKB-KW"/>
</dbReference>
<dbReference type="GO" id="GO:0016743">
    <property type="term" value="F:carboxyl- or carbamoyltransferase activity"/>
    <property type="evidence" value="ECO:0007669"/>
    <property type="project" value="UniProtKB-UniRule"/>
</dbReference>
<dbReference type="GO" id="GO:0006633">
    <property type="term" value="P:fatty acid biosynthetic process"/>
    <property type="evidence" value="ECO:0007669"/>
    <property type="project" value="UniProtKB-KW"/>
</dbReference>
<dbReference type="GO" id="GO:2001295">
    <property type="term" value="P:malonyl-CoA biosynthetic process"/>
    <property type="evidence" value="ECO:0007669"/>
    <property type="project" value="UniProtKB-UniRule"/>
</dbReference>
<dbReference type="Gene3D" id="3.90.226.10">
    <property type="entry name" value="2-enoyl-CoA Hydratase, Chain A, domain 1"/>
    <property type="match status" value="1"/>
</dbReference>
<dbReference type="HAMAP" id="MF_00823">
    <property type="entry name" value="AcetylCoA_CT_alpha"/>
    <property type="match status" value="1"/>
</dbReference>
<dbReference type="InterPro" id="IPR001095">
    <property type="entry name" value="Acetyl_CoA_COase_a_su"/>
</dbReference>
<dbReference type="InterPro" id="IPR029045">
    <property type="entry name" value="ClpP/crotonase-like_dom_sf"/>
</dbReference>
<dbReference type="InterPro" id="IPR011763">
    <property type="entry name" value="COA_CT_C"/>
</dbReference>
<dbReference type="NCBIfam" id="TIGR00513">
    <property type="entry name" value="accA"/>
    <property type="match status" value="1"/>
</dbReference>
<dbReference type="NCBIfam" id="NF041504">
    <property type="entry name" value="AccA_sub"/>
    <property type="match status" value="1"/>
</dbReference>
<dbReference type="NCBIfam" id="NF004344">
    <property type="entry name" value="PRK05724.1"/>
    <property type="match status" value="1"/>
</dbReference>
<dbReference type="PANTHER" id="PTHR42853">
    <property type="entry name" value="ACETYL-COENZYME A CARBOXYLASE CARBOXYL TRANSFERASE SUBUNIT ALPHA"/>
    <property type="match status" value="1"/>
</dbReference>
<dbReference type="PANTHER" id="PTHR42853:SF3">
    <property type="entry name" value="ACETYL-COENZYME A CARBOXYLASE CARBOXYL TRANSFERASE SUBUNIT ALPHA, CHLOROPLASTIC"/>
    <property type="match status" value="1"/>
</dbReference>
<dbReference type="Pfam" id="PF03255">
    <property type="entry name" value="ACCA"/>
    <property type="match status" value="1"/>
</dbReference>
<dbReference type="PRINTS" id="PR01069">
    <property type="entry name" value="ACCCTRFRASEA"/>
</dbReference>
<dbReference type="SUPFAM" id="SSF52096">
    <property type="entry name" value="ClpP/crotonase"/>
    <property type="match status" value="1"/>
</dbReference>
<dbReference type="PROSITE" id="PS50989">
    <property type="entry name" value="COA_CT_CTER"/>
    <property type="match status" value="1"/>
</dbReference>
<reference key="1">
    <citation type="journal article" date="2012" name="BMC Genomics">
        <title>Comparative genomics and transcriptomics of lineages I, II, and III strains of Listeria monocytogenes.</title>
        <authorList>
            <person name="Hain T."/>
            <person name="Ghai R."/>
            <person name="Billion A."/>
            <person name="Kuenne C.T."/>
            <person name="Steinweg C."/>
            <person name="Izar B."/>
            <person name="Mohamed W."/>
            <person name="Mraheil M."/>
            <person name="Domann E."/>
            <person name="Schaffrath S."/>
            <person name="Karst U."/>
            <person name="Goesmann A."/>
            <person name="Oehm S."/>
            <person name="Puhler A."/>
            <person name="Merkl R."/>
            <person name="Vorwerk S."/>
            <person name="Glaser P."/>
            <person name="Garrido P."/>
            <person name="Rusniok C."/>
            <person name="Buchrieser C."/>
            <person name="Goebel W."/>
            <person name="Chakraborty T."/>
        </authorList>
    </citation>
    <scope>NUCLEOTIDE SEQUENCE [LARGE SCALE GENOMIC DNA]</scope>
    <source>
        <strain>CLIP80459</strain>
    </source>
</reference>
<name>ACCA_LISMC</name>
<gene>
    <name evidence="1" type="primary">accA</name>
    <name type="ordered locus">Lm4b_01583</name>
</gene>
<proteinExistence type="inferred from homology"/>
<evidence type="ECO:0000255" key="1">
    <source>
        <dbReference type="HAMAP-Rule" id="MF_00823"/>
    </source>
</evidence>
<evidence type="ECO:0000255" key="2">
    <source>
        <dbReference type="PROSITE-ProRule" id="PRU01137"/>
    </source>
</evidence>
<accession>C1KVL9</accession>
<keyword id="KW-0067">ATP-binding</keyword>
<keyword id="KW-0963">Cytoplasm</keyword>
<keyword id="KW-0275">Fatty acid biosynthesis</keyword>
<keyword id="KW-0276">Fatty acid metabolism</keyword>
<keyword id="KW-0444">Lipid biosynthesis</keyword>
<keyword id="KW-0443">Lipid metabolism</keyword>
<keyword id="KW-0547">Nucleotide-binding</keyword>
<keyword id="KW-0808">Transferase</keyword>